<protein>
    <recommendedName>
        <fullName evidence="1">Dual-action ribosomal maturation protein DarP</fullName>
    </recommendedName>
    <alternativeName>
        <fullName evidence="1">Large ribosomal subunit assembly factor DarP</fullName>
    </alternativeName>
</protein>
<comment type="function">
    <text evidence="1">Member of a network of 50S ribosomal subunit biogenesis factors which assembles along the 30S-50S interface, preventing incorrect 23S rRNA structures from forming. Promotes peptidyl transferase center (PTC) maturation.</text>
</comment>
<comment type="subcellular location">
    <subcellularLocation>
        <location evidence="1">Cytoplasm</location>
    </subcellularLocation>
    <text evidence="1">Associates with late stage pre-50S ribosomal subunits.</text>
</comment>
<comment type="similarity">
    <text evidence="1">Belongs to the DarP family.</text>
</comment>
<keyword id="KW-0963">Cytoplasm</keyword>
<keyword id="KW-1185">Reference proteome</keyword>
<keyword id="KW-0690">Ribosome biogenesis</keyword>
<keyword id="KW-0694">RNA-binding</keyword>
<keyword id="KW-0699">rRNA-binding</keyword>
<accession>Q2Y6B8</accession>
<organism>
    <name type="scientific">Nitrosospira multiformis (strain ATCC 25196 / NCIMB 11849 / C 71)</name>
    <dbReference type="NCBI Taxonomy" id="323848"/>
    <lineage>
        <taxon>Bacteria</taxon>
        <taxon>Pseudomonadati</taxon>
        <taxon>Pseudomonadota</taxon>
        <taxon>Betaproteobacteria</taxon>
        <taxon>Nitrosomonadales</taxon>
        <taxon>Nitrosomonadaceae</taxon>
        <taxon>Nitrosospira</taxon>
    </lineage>
</organism>
<dbReference type="EMBL" id="CP000103">
    <property type="protein sequence ID" value="ABB75703.1"/>
    <property type="molecule type" value="Genomic_DNA"/>
</dbReference>
<dbReference type="RefSeq" id="WP_011381704.1">
    <property type="nucleotide sequence ID" value="NC_007614.1"/>
</dbReference>
<dbReference type="SMR" id="Q2Y6B8"/>
<dbReference type="STRING" id="323848.Nmul_A2414"/>
<dbReference type="KEGG" id="nmu:Nmul_A2414"/>
<dbReference type="eggNOG" id="COG3028">
    <property type="taxonomic scope" value="Bacteria"/>
</dbReference>
<dbReference type="HOGENOM" id="CLU_106757_3_0_4"/>
<dbReference type="OrthoDB" id="5293604at2"/>
<dbReference type="Proteomes" id="UP000002718">
    <property type="component" value="Chromosome"/>
</dbReference>
<dbReference type="GO" id="GO:0005829">
    <property type="term" value="C:cytosol"/>
    <property type="evidence" value="ECO:0007669"/>
    <property type="project" value="TreeGrafter"/>
</dbReference>
<dbReference type="GO" id="GO:0043022">
    <property type="term" value="F:ribosome binding"/>
    <property type="evidence" value="ECO:0007669"/>
    <property type="project" value="UniProtKB-UniRule"/>
</dbReference>
<dbReference type="GO" id="GO:0019843">
    <property type="term" value="F:rRNA binding"/>
    <property type="evidence" value="ECO:0007669"/>
    <property type="project" value="UniProtKB-UniRule"/>
</dbReference>
<dbReference type="GO" id="GO:1902626">
    <property type="term" value="P:assembly of large subunit precursor of preribosome"/>
    <property type="evidence" value="ECO:0007669"/>
    <property type="project" value="UniProtKB-UniRule"/>
</dbReference>
<dbReference type="CDD" id="cd16331">
    <property type="entry name" value="YjgA-like"/>
    <property type="match status" value="1"/>
</dbReference>
<dbReference type="Gene3D" id="1.10.60.30">
    <property type="entry name" value="PSPTO4464-like domains"/>
    <property type="match status" value="2"/>
</dbReference>
<dbReference type="HAMAP" id="MF_00765">
    <property type="entry name" value="DarP"/>
    <property type="match status" value="1"/>
</dbReference>
<dbReference type="InterPro" id="IPR006839">
    <property type="entry name" value="DarP"/>
</dbReference>
<dbReference type="InterPro" id="IPR023153">
    <property type="entry name" value="DarP_sf"/>
</dbReference>
<dbReference type="NCBIfam" id="NF003593">
    <property type="entry name" value="PRK05255.1-1"/>
    <property type="match status" value="1"/>
</dbReference>
<dbReference type="PANTHER" id="PTHR38101">
    <property type="entry name" value="UPF0307 PROTEIN YJGA"/>
    <property type="match status" value="1"/>
</dbReference>
<dbReference type="PANTHER" id="PTHR38101:SF1">
    <property type="entry name" value="UPF0307 PROTEIN YJGA"/>
    <property type="match status" value="1"/>
</dbReference>
<dbReference type="Pfam" id="PF04751">
    <property type="entry name" value="DarP"/>
    <property type="match status" value="1"/>
</dbReference>
<dbReference type="PIRSF" id="PIRSF016183">
    <property type="entry name" value="UCP016183"/>
    <property type="match status" value="1"/>
</dbReference>
<dbReference type="SUPFAM" id="SSF158710">
    <property type="entry name" value="PSPTO4464-like"/>
    <property type="match status" value="1"/>
</dbReference>
<feature type="chain" id="PRO_0000257633" description="Dual-action ribosomal maturation protein DarP">
    <location>
        <begin position="1"/>
        <end position="182"/>
    </location>
</feature>
<feature type="region of interest" description="Disordered" evidence="2">
    <location>
        <begin position="1"/>
        <end position="25"/>
    </location>
</feature>
<name>DARP_NITMU</name>
<reference key="1">
    <citation type="submission" date="2005-08" db="EMBL/GenBank/DDBJ databases">
        <title>Complete sequence of chromosome 1 of Nitrosospira multiformis ATCC 25196.</title>
        <authorList>
            <person name="Copeland A."/>
            <person name="Lucas S."/>
            <person name="Lapidus A."/>
            <person name="Barry K."/>
            <person name="Detter J.C."/>
            <person name="Glavina T."/>
            <person name="Hammon N."/>
            <person name="Israni S."/>
            <person name="Pitluck S."/>
            <person name="Chain P."/>
            <person name="Malfatti S."/>
            <person name="Shin M."/>
            <person name="Vergez L."/>
            <person name="Schmutz J."/>
            <person name="Larimer F."/>
            <person name="Land M."/>
            <person name="Hauser L."/>
            <person name="Kyrpides N."/>
            <person name="Lykidis A."/>
            <person name="Richardson P."/>
        </authorList>
    </citation>
    <scope>NUCLEOTIDE SEQUENCE [LARGE SCALE GENOMIC DNA]</scope>
    <source>
        <strain>ATCC 25196 / NCIMB 11849 / C 71</strain>
    </source>
</reference>
<evidence type="ECO:0000255" key="1">
    <source>
        <dbReference type="HAMAP-Rule" id="MF_00765"/>
    </source>
</evidence>
<evidence type="ECO:0000256" key="2">
    <source>
        <dbReference type="SAM" id="MobiDB-lite"/>
    </source>
</evidence>
<gene>
    <name evidence="1" type="primary">darP</name>
    <name type="ordered locus">Nmul_A2414</name>
</gene>
<sequence length="182" mass="20858">MEENLADNSEREARPSKTKRKKEMHALQNIGESLVRLDSRRLIELGLPDTLMEAVLEAKRMSKHGALRRQMQLIGKLMRDVDAEPIRKKLDLWGNSSAESTARLHQLERWRERLMADQQMQALSELGQKYPDADLQRLRALARNAVKEKLANKPPKSFRALFQELQKIIPAATGERPGEGID</sequence>
<proteinExistence type="inferred from homology"/>